<organism>
    <name type="scientific">Pelagibacter ubique (strain HTCC1062)</name>
    <dbReference type="NCBI Taxonomy" id="335992"/>
    <lineage>
        <taxon>Bacteria</taxon>
        <taxon>Pseudomonadati</taxon>
        <taxon>Pseudomonadota</taxon>
        <taxon>Alphaproteobacteria</taxon>
        <taxon>Candidatus Pelagibacterales</taxon>
        <taxon>Candidatus Pelagibacteraceae</taxon>
        <taxon>Candidatus Pelagibacter</taxon>
    </lineage>
</organism>
<gene>
    <name type="ordered locus">SAR11_0660</name>
</gene>
<dbReference type="EC" id="4.2.1.-" evidence="1"/>
<dbReference type="EMBL" id="CP000084">
    <property type="protein sequence ID" value="AAZ21480.1"/>
    <property type="molecule type" value="Genomic_DNA"/>
</dbReference>
<dbReference type="RefSeq" id="WP_011281846.1">
    <property type="nucleotide sequence ID" value="NC_007205.1"/>
</dbReference>
<dbReference type="SMR" id="Q4FMV9"/>
<dbReference type="STRING" id="335992.SAR11_0660"/>
<dbReference type="GeneID" id="66295164"/>
<dbReference type="KEGG" id="pub:SAR11_0660"/>
<dbReference type="eggNOG" id="COG4336">
    <property type="taxonomic scope" value="Bacteria"/>
</dbReference>
<dbReference type="HOGENOM" id="CLU_059759_0_0_5"/>
<dbReference type="OrthoDB" id="149585at2"/>
<dbReference type="Proteomes" id="UP000002528">
    <property type="component" value="Chromosome"/>
</dbReference>
<dbReference type="GO" id="GO:0016829">
    <property type="term" value="F:lyase activity"/>
    <property type="evidence" value="ECO:0007669"/>
    <property type="project" value="UniProtKB-KW"/>
</dbReference>
<dbReference type="FunFam" id="3.30.2040.10:FF:000001">
    <property type="entry name" value="D-glutamate cyclase, mitochondrial"/>
    <property type="match status" value="1"/>
</dbReference>
<dbReference type="Gene3D" id="3.40.1640.10">
    <property type="entry name" value="PSTPO5379-like"/>
    <property type="match status" value="1"/>
</dbReference>
<dbReference type="Gene3D" id="3.30.2040.10">
    <property type="entry name" value="PSTPO5379-like domain"/>
    <property type="match status" value="1"/>
</dbReference>
<dbReference type="HAMAP" id="MF_01830">
    <property type="entry name" value="Hydro_lyase"/>
    <property type="match status" value="1"/>
</dbReference>
<dbReference type="InterPro" id="IPR009906">
    <property type="entry name" value="D-Glu_cyclase"/>
</dbReference>
<dbReference type="InterPro" id="IPR038021">
    <property type="entry name" value="Putative_hydro-lyase"/>
</dbReference>
<dbReference type="InterPro" id="IPR016938">
    <property type="entry name" value="UPF0317"/>
</dbReference>
<dbReference type="NCBIfam" id="NF003969">
    <property type="entry name" value="PRK05463.1"/>
    <property type="match status" value="1"/>
</dbReference>
<dbReference type="PANTHER" id="PTHR32022">
    <property type="entry name" value="D-GLUTAMATE CYCLASE, MITOCHONDRIAL"/>
    <property type="match status" value="1"/>
</dbReference>
<dbReference type="PANTHER" id="PTHR32022:SF10">
    <property type="entry name" value="D-GLUTAMATE CYCLASE, MITOCHONDRIAL"/>
    <property type="match status" value="1"/>
</dbReference>
<dbReference type="Pfam" id="PF07286">
    <property type="entry name" value="D-Glu_cyclase"/>
    <property type="match status" value="1"/>
</dbReference>
<dbReference type="PIRSF" id="PIRSF029755">
    <property type="entry name" value="UCP029755"/>
    <property type="match status" value="1"/>
</dbReference>
<dbReference type="SUPFAM" id="SSF160920">
    <property type="entry name" value="PSTPO5379-like"/>
    <property type="match status" value="1"/>
</dbReference>
<sequence>MLDIKNPIEARKVIRKNEYRNQTAGTANKYVQGNLCILPSKYAMDFASFCQKNPKPCPLIGFGTKGDPSLKDLGDIDIRTDVPQYRIWEKGKIIDEPYDIKKYWNEDLTTFVLGCSMSFELPLIEAGIPIQHIENDTIVPMYRTSIDCEPAGQFSGKLVVSMRPLNSKDAIRSIQISSRFPAVHGAPIHLGDPSEIGIKDIMNPEYGDPPKAFKNNEIPVFWACGVTPQSVLQDSKPDFCITHAPGKMLITDKLNNDLAAL</sequence>
<evidence type="ECO:0000255" key="1">
    <source>
        <dbReference type="HAMAP-Rule" id="MF_01830"/>
    </source>
</evidence>
<reference key="1">
    <citation type="journal article" date="2005" name="Science">
        <title>Genome streamlining in a cosmopolitan oceanic bacterium.</title>
        <authorList>
            <person name="Giovannoni S.J."/>
            <person name="Tripp H.J."/>
            <person name="Givan S."/>
            <person name="Podar M."/>
            <person name="Vergin K.L."/>
            <person name="Baptista D."/>
            <person name="Bibbs L."/>
            <person name="Eads J."/>
            <person name="Richardson T.H."/>
            <person name="Noordewier M."/>
            <person name="Rappe M.S."/>
            <person name="Short J.M."/>
            <person name="Carrington J.C."/>
            <person name="Mathur E.J."/>
        </authorList>
    </citation>
    <scope>NUCLEOTIDE SEQUENCE [LARGE SCALE GENOMIC DNA]</scope>
    <source>
        <strain>HTCC1062</strain>
    </source>
</reference>
<name>Y660_PELUB</name>
<comment type="similarity">
    <text evidence="1">Belongs to the D-glutamate cyclase family.</text>
</comment>
<feature type="chain" id="PRO_0000379851" description="Putative hydro-lyase SAR11_0660">
    <location>
        <begin position="1"/>
        <end position="261"/>
    </location>
</feature>
<keyword id="KW-0456">Lyase</keyword>
<keyword id="KW-1185">Reference proteome</keyword>
<protein>
    <recommendedName>
        <fullName evidence="1">Putative hydro-lyase SAR11_0660</fullName>
        <ecNumber evidence="1">4.2.1.-</ecNumber>
    </recommendedName>
</protein>
<accession>Q4FMV9</accession>
<proteinExistence type="inferred from homology"/>